<organism>
    <name type="scientific">Rachiplusia ou multiple nucleopolyhedrovirus (strain R1)</name>
    <name type="common">RoMNPV</name>
    <dbReference type="NCBI Taxonomy" id="654904"/>
    <lineage>
        <taxon>Viruses</taxon>
        <taxon>Viruses incertae sedis</taxon>
        <taxon>Naldaviricetes</taxon>
        <taxon>Lefavirales</taxon>
        <taxon>Baculoviridae</taxon>
        <taxon>Alphabaculovirus</taxon>
        <taxon>Alphabaculovirus raous</taxon>
    </lineage>
</organism>
<dbReference type="EC" id="2.3.2.27"/>
<dbReference type="EMBL" id="AY145471">
    <property type="protein sequence ID" value="AAN28041.1"/>
    <property type="molecule type" value="Genomic_DNA"/>
</dbReference>
<dbReference type="SMR" id="Q8B9B2"/>
<dbReference type="Proteomes" id="UP000007020">
    <property type="component" value="Segment"/>
</dbReference>
<dbReference type="GO" id="GO:0042025">
    <property type="term" value="C:host cell nucleus"/>
    <property type="evidence" value="ECO:0007669"/>
    <property type="project" value="UniProtKB-SubCell"/>
</dbReference>
<dbReference type="GO" id="GO:0016740">
    <property type="term" value="F:transferase activity"/>
    <property type="evidence" value="ECO:0007669"/>
    <property type="project" value="UniProtKB-KW"/>
</dbReference>
<dbReference type="GO" id="GO:0008270">
    <property type="term" value="F:zinc ion binding"/>
    <property type="evidence" value="ECO:0007669"/>
    <property type="project" value="UniProtKB-KW"/>
</dbReference>
<dbReference type="GO" id="GO:0039648">
    <property type="term" value="P:symbiont-mediated perturbation of host ubiquitin-like protein modification"/>
    <property type="evidence" value="ECO:0007669"/>
    <property type="project" value="UniProtKB-KW"/>
</dbReference>
<dbReference type="Gene3D" id="3.30.40.10">
    <property type="entry name" value="Zinc/RING finger domain, C3HC4 (zinc finger)"/>
    <property type="match status" value="1"/>
</dbReference>
<dbReference type="InterPro" id="IPR018957">
    <property type="entry name" value="Znf_C3HC4_RING-type"/>
</dbReference>
<dbReference type="InterPro" id="IPR001841">
    <property type="entry name" value="Znf_RING"/>
</dbReference>
<dbReference type="InterPro" id="IPR013083">
    <property type="entry name" value="Znf_RING/FYVE/PHD"/>
</dbReference>
<dbReference type="InterPro" id="IPR017907">
    <property type="entry name" value="Znf_RING_CS"/>
</dbReference>
<dbReference type="Pfam" id="PF00097">
    <property type="entry name" value="zf-C3HC4"/>
    <property type="match status" value="1"/>
</dbReference>
<dbReference type="SUPFAM" id="SSF57850">
    <property type="entry name" value="RING/U-box"/>
    <property type="match status" value="1"/>
</dbReference>
<dbReference type="PROSITE" id="PS00518">
    <property type="entry name" value="ZF_RING_1"/>
    <property type="match status" value="1"/>
</dbReference>
<dbReference type="PROSITE" id="PS50089">
    <property type="entry name" value="ZF_RING_2"/>
    <property type="match status" value="1"/>
</dbReference>
<accession>Q8B9B2</accession>
<reference key="1">
    <citation type="journal article" date="2003" name="J. Gen. Virol.">
        <title>Comparative analysis of the genomes of Rachiplusia ou and Autographa californica multiple nucleopolyhedroviruses.</title>
        <authorList>
            <person name="Harrison R.L."/>
            <person name="Bonning B.C."/>
        </authorList>
    </citation>
    <scope>NUCLEOTIDE SEQUENCE [LARGE SCALE GENOMIC DNA]</scope>
</reference>
<keyword id="KW-0175">Coiled coil</keyword>
<keyword id="KW-0244">Early protein</keyword>
<keyword id="KW-1048">Host nucleus</keyword>
<keyword id="KW-0945">Host-virus interaction</keyword>
<keyword id="KW-0479">Metal-binding</keyword>
<keyword id="KW-1128">Modulation of host ubiquitin pathway by viral E3 ligase</keyword>
<keyword id="KW-1130">Modulation of host ubiquitin pathway by virus</keyword>
<keyword id="KW-1185">Reference proteome</keyword>
<keyword id="KW-0808">Transferase</keyword>
<keyword id="KW-0832">Ubl conjugation</keyword>
<keyword id="KW-0833">Ubl conjugation pathway</keyword>
<keyword id="KW-0862">Zinc</keyword>
<keyword id="KW-0863">Zinc-finger</keyword>
<protein>
    <recommendedName>
        <fullName>E3 ubiquitin-protein ligase IE2</fullName>
        <ecNumber>2.3.2.27</ecNumber>
    </recommendedName>
    <alternativeName>
        <fullName>Immediate-early protein IE2</fullName>
    </alternativeName>
    <alternativeName>
        <fullName>RING-type E3 ubiquitin transferase IE2</fullName>
    </alternativeName>
</protein>
<organismHost>
    <name type="scientific">Helicoverpa zea</name>
    <name type="common">Corn earworm moth</name>
    <name type="synonym">Heliothis zea</name>
    <dbReference type="NCBI Taxonomy" id="7113"/>
</organismHost>
<organismHost>
    <name type="scientific">Lepidoptera</name>
    <name type="common">butterflies and moths</name>
    <dbReference type="NCBI Taxonomy" id="7088"/>
</organismHost>
<organismHost>
    <name type="scientific">Ostrinia nubilalis</name>
    <name type="common">European corn borer</name>
    <name type="synonym">Pyralis nubilalis</name>
    <dbReference type="NCBI Taxonomy" id="29057"/>
</organismHost>
<comment type="function">
    <text evidence="1">RING-finger E3 ubiquitin ligase that plays an important regulatory role during the initial stages of infection. Migrates to specific nuclear foci early in infection supposely to prepare the sites for viral replication by targeting and ubiquitinating host proteins.</text>
</comment>
<comment type="catalytic activity">
    <reaction>
        <text>S-ubiquitinyl-[E2 ubiquitin-conjugating enzyme]-L-cysteine + [acceptor protein]-L-lysine = [E2 ubiquitin-conjugating enzyme]-L-cysteine + N(6)-ubiquitinyl-[acceptor protein]-L-lysine.</text>
        <dbReference type="EC" id="2.3.2.27"/>
    </reaction>
</comment>
<comment type="subunit">
    <text evidence="1">Homooligomer.</text>
</comment>
<comment type="subcellular location">
    <subcellularLocation>
        <location evidence="1">Host nucleus</location>
    </subcellularLocation>
</comment>
<comment type="PTM">
    <text evidence="1">Auto-ubiquitinated.</text>
</comment>
<comment type="similarity">
    <text evidence="5">Belongs to the alphabaculovirus IE2 protein family.</text>
</comment>
<name>VIE2_NPVR1</name>
<proteinExistence type="inferred from homology"/>
<evidence type="ECO:0000250" key="1">
    <source>
        <dbReference type="UniProtKB" id="O92503"/>
    </source>
</evidence>
<evidence type="ECO:0000255" key="2"/>
<evidence type="ECO:0000255" key="3">
    <source>
        <dbReference type="PROSITE-ProRule" id="PRU00175"/>
    </source>
</evidence>
<evidence type="ECO:0000256" key="4">
    <source>
        <dbReference type="SAM" id="MobiDB-lite"/>
    </source>
</evidence>
<evidence type="ECO:0000305" key="5"/>
<feature type="chain" id="PRO_0000396077" description="E3 ubiquitin-protein ligase IE2">
    <location>
        <begin position="1"/>
        <end position="407"/>
    </location>
</feature>
<feature type="zinc finger region" description="RING-type; degenerate" evidence="3">
    <location>
        <begin position="206"/>
        <end position="254"/>
    </location>
</feature>
<feature type="region of interest" description="Disordered" evidence="4">
    <location>
        <begin position="1"/>
        <end position="69"/>
    </location>
</feature>
<feature type="region of interest" description="Disordered" evidence="4">
    <location>
        <begin position="179"/>
        <end position="200"/>
    </location>
</feature>
<feature type="coiled-coil region" evidence="2">
    <location>
        <begin position="127"/>
        <end position="158"/>
    </location>
</feature>
<feature type="coiled-coil region" evidence="2">
    <location>
        <begin position="336"/>
        <end position="393"/>
    </location>
</feature>
<feature type="compositionally biased region" description="Polar residues" evidence="4">
    <location>
        <begin position="1"/>
        <end position="10"/>
    </location>
</feature>
<feature type="compositionally biased region" description="Basic residues" evidence="4">
    <location>
        <begin position="13"/>
        <end position="25"/>
    </location>
</feature>
<feature type="compositionally biased region" description="Low complexity" evidence="4">
    <location>
        <begin position="31"/>
        <end position="47"/>
    </location>
</feature>
<feature type="compositionally biased region" description="Low complexity" evidence="4">
    <location>
        <begin position="186"/>
        <end position="196"/>
    </location>
</feature>
<sequence length="407" mass="46665">MSRQINAATPSSSRHHRLSLSRRRINFTTPSEAQPSSSSRSQTSSSSRSHRRQERRQEQRVSEENVQIIGNVNEPLTRSYHRQGVTYNVHGEVNISNADPLLSQEDDVILINSENVDRERFPDISSQQYQNNIASETAAQRALQRALDLEAQLMNEIAPRSPVYSPSYAPNSPNYVIPQSPDLFASPQSSEQQQQSEPEEDVEVSCNICFTTFKDTKNVNSSFVTTTHCNHAVCFKCYVKIIMANSVYKCFCSATSSNCRVYNKHGYVEFMPIDVTRNQDSIKQHWRELLENNTVNNQTTDLNYVEQLQKELAELRAKTCQVEHKMTMLNSDYIMLKHKHAVAELDLQKANYDLQESTKKSEELQSTVNNLQEQLNKQVVESQAKFLEFERNNSDLVSKLQTVMSRR</sequence>
<gene>
    <name type="primary">IE2</name>
</gene>